<evidence type="ECO:0000255" key="1">
    <source>
        <dbReference type="HAMAP-Rule" id="MF_00213"/>
    </source>
</evidence>
<organism>
    <name type="scientific">Cereibacter sphaeroides (strain KD131 / KCTC 12085)</name>
    <name type="common">Rhodobacter sphaeroides</name>
    <dbReference type="NCBI Taxonomy" id="557760"/>
    <lineage>
        <taxon>Bacteria</taxon>
        <taxon>Pseudomonadati</taxon>
        <taxon>Pseudomonadota</taxon>
        <taxon>Alphaproteobacteria</taxon>
        <taxon>Rhodobacterales</taxon>
        <taxon>Paracoccaceae</taxon>
        <taxon>Cereibacter</taxon>
    </lineage>
</organism>
<comment type="function">
    <text evidence="1">Involved in the maturation of [NiFe] hydrogenases. Required for nickel insertion into the metal center of the hydrogenase.</text>
</comment>
<comment type="similarity">
    <text evidence="1">Belongs to the HypA/HybF family.</text>
</comment>
<name>HYPA_CERSK</name>
<gene>
    <name evidence="1" type="primary">hypA</name>
    <name type="ordered locus">RSKD131_1837</name>
</gene>
<sequence>MHEMSLCEGIRGIVEDQARRHGFAAVKVLRLEIGRFAGVEKAALGFAFDVVMRGSAAEGARLEILDLPGRALCYDCGEEAVIEDRFDPCPLCGGGRLMPVGGDEMRIKDMEVQ</sequence>
<accession>B9KKQ0</accession>
<reference key="1">
    <citation type="journal article" date="2009" name="J. Bacteriol.">
        <title>Complete genome sequence of Rhodobacter sphaeroides KD131.</title>
        <authorList>
            <person name="Lim S.-K."/>
            <person name="Kim S.J."/>
            <person name="Cha S.H."/>
            <person name="Oh Y.-K."/>
            <person name="Rhee H.-J."/>
            <person name="Kim M.-S."/>
            <person name="Lee J.K."/>
        </authorList>
    </citation>
    <scope>NUCLEOTIDE SEQUENCE [LARGE SCALE GENOMIC DNA]</scope>
    <source>
        <strain>KD131 / KCTC 12085</strain>
    </source>
</reference>
<feature type="chain" id="PRO_1000124777" description="Hydrogenase maturation factor HypA">
    <location>
        <begin position="1"/>
        <end position="113"/>
    </location>
</feature>
<feature type="binding site" evidence="1">
    <location>
        <position position="2"/>
    </location>
    <ligand>
        <name>Ni(2+)</name>
        <dbReference type="ChEBI" id="CHEBI:49786"/>
    </ligand>
</feature>
<feature type="binding site" evidence="1">
    <location>
        <position position="73"/>
    </location>
    <ligand>
        <name>Zn(2+)</name>
        <dbReference type="ChEBI" id="CHEBI:29105"/>
    </ligand>
</feature>
<feature type="binding site" evidence="1">
    <location>
        <position position="76"/>
    </location>
    <ligand>
        <name>Zn(2+)</name>
        <dbReference type="ChEBI" id="CHEBI:29105"/>
    </ligand>
</feature>
<feature type="binding site" evidence="1">
    <location>
        <position position="89"/>
    </location>
    <ligand>
        <name>Zn(2+)</name>
        <dbReference type="ChEBI" id="CHEBI:29105"/>
    </ligand>
</feature>
<feature type="binding site" evidence="1">
    <location>
        <position position="92"/>
    </location>
    <ligand>
        <name>Zn(2+)</name>
        <dbReference type="ChEBI" id="CHEBI:29105"/>
    </ligand>
</feature>
<dbReference type="EMBL" id="CP001150">
    <property type="protein sequence ID" value="ACM01697.1"/>
    <property type="molecule type" value="Genomic_DNA"/>
</dbReference>
<dbReference type="RefSeq" id="WP_009566004.1">
    <property type="nucleotide sequence ID" value="NC_011963.1"/>
</dbReference>
<dbReference type="SMR" id="B9KKQ0"/>
<dbReference type="GeneID" id="67447236"/>
<dbReference type="KEGG" id="rsk:RSKD131_1837"/>
<dbReference type="HOGENOM" id="CLU_126929_0_0_5"/>
<dbReference type="GO" id="GO:0016151">
    <property type="term" value="F:nickel cation binding"/>
    <property type="evidence" value="ECO:0007669"/>
    <property type="project" value="UniProtKB-UniRule"/>
</dbReference>
<dbReference type="GO" id="GO:0008270">
    <property type="term" value="F:zinc ion binding"/>
    <property type="evidence" value="ECO:0007669"/>
    <property type="project" value="UniProtKB-UniRule"/>
</dbReference>
<dbReference type="GO" id="GO:0051604">
    <property type="term" value="P:protein maturation"/>
    <property type="evidence" value="ECO:0007669"/>
    <property type="project" value="InterPro"/>
</dbReference>
<dbReference type="GO" id="GO:0036211">
    <property type="term" value="P:protein modification process"/>
    <property type="evidence" value="ECO:0007669"/>
    <property type="project" value="UniProtKB-UniRule"/>
</dbReference>
<dbReference type="Gene3D" id="3.30.2320.80">
    <property type="match status" value="1"/>
</dbReference>
<dbReference type="HAMAP" id="MF_00213">
    <property type="entry name" value="HypA_HybF"/>
    <property type="match status" value="1"/>
</dbReference>
<dbReference type="InterPro" id="IPR020538">
    <property type="entry name" value="Hydgase_Ni_incorp_HypA/HybF_CS"/>
</dbReference>
<dbReference type="InterPro" id="IPR000688">
    <property type="entry name" value="HypA/HybF"/>
</dbReference>
<dbReference type="NCBIfam" id="TIGR00100">
    <property type="entry name" value="hypA"/>
    <property type="match status" value="1"/>
</dbReference>
<dbReference type="PANTHER" id="PTHR34535">
    <property type="entry name" value="HYDROGENASE MATURATION FACTOR HYPA"/>
    <property type="match status" value="1"/>
</dbReference>
<dbReference type="PANTHER" id="PTHR34535:SF3">
    <property type="entry name" value="HYDROGENASE MATURATION FACTOR HYPA"/>
    <property type="match status" value="1"/>
</dbReference>
<dbReference type="Pfam" id="PF01155">
    <property type="entry name" value="HypA"/>
    <property type="match status" value="1"/>
</dbReference>
<dbReference type="PIRSF" id="PIRSF004761">
    <property type="entry name" value="Hydrgn_mat_HypA"/>
    <property type="match status" value="1"/>
</dbReference>
<dbReference type="PROSITE" id="PS01249">
    <property type="entry name" value="HYPA"/>
    <property type="match status" value="1"/>
</dbReference>
<protein>
    <recommendedName>
        <fullName evidence="1">Hydrogenase maturation factor HypA</fullName>
    </recommendedName>
</protein>
<proteinExistence type="inferred from homology"/>
<keyword id="KW-0479">Metal-binding</keyword>
<keyword id="KW-0533">Nickel</keyword>
<keyword id="KW-0862">Zinc</keyword>